<gene>
    <name evidence="1" type="primary">murD</name>
    <name type="ordered locus">IL0434</name>
</gene>
<protein>
    <recommendedName>
        <fullName evidence="1">UDP-N-acetylmuramoylalanine--D-glutamate ligase</fullName>
        <ecNumber evidence="1">6.3.2.9</ecNumber>
    </recommendedName>
    <alternativeName>
        <fullName evidence="1">D-glutamic acid-adding enzyme</fullName>
    </alternativeName>
    <alternativeName>
        <fullName evidence="1">UDP-N-acetylmuramoyl-L-alanyl-D-glutamate synthetase</fullName>
    </alternativeName>
</protein>
<evidence type="ECO:0000255" key="1">
    <source>
        <dbReference type="HAMAP-Rule" id="MF_00639"/>
    </source>
</evidence>
<accession>Q5R0M3</accession>
<name>MURD_IDILO</name>
<organism>
    <name type="scientific">Idiomarina loihiensis (strain ATCC BAA-735 / DSM 15497 / L2-TR)</name>
    <dbReference type="NCBI Taxonomy" id="283942"/>
    <lineage>
        <taxon>Bacteria</taxon>
        <taxon>Pseudomonadati</taxon>
        <taxon>Pseudomonadota</taxon>
        <taxon>Gammaproteobacteria</taxon>
        <taxon>Alteromonadales</taxon>
        <taxon>Idiomarinaceae</taxon>
        <taxon>Idiomarina</taxon>
    </lineage>
</organism>
<proteinExistence type="inferred from homology"/>
<keyword id="KW-0067">ATP-binding</keyword>
<keyword id="KW-0131">Cell cycle</keyword>
<keyword id="KW-0132">Cell division</keyword>
<keyword id="KW-0133">Cell shape</keyword>
<keyword id="KW-0961">Cell wall biogenesis/degradation</keyword>
<keyword id="KW-0963">Cytoplasm</keyword>
<keyword id="KW-0436">Ligase</keyword>
<keyword id="KW-0547">Nucleotide-binding</keyword>
<keyword id="KW-0573">Peptidoglycan synthesis</keyword>
<keyword id="KW-1185">Reference proteome</keyword>
<dbReference type="EC" id="6.3.2.9" evidence="1"/>
<dbReference type="EMBL" id="AE017340">
    <property type="protein sequence ID" value="AAV81277.1"/>
    <property type="molecule type" value="Genomic_DNA"/>
</dbReference>
<dbReference type="RefSeq" id="WP_011233695.1">
    <property type="nucleotide sequence ID" value="NC_006512.1"/>
</dbReference>
<dbReference type="SMR" id="Q5R0M3"/>
<dbReference type="STRING" id="283942.IL0434"/>
<dbReference type="GeneID" id="41335586"/>
<dbReference type="KEGG" id="ilo:IL0434"/>
<dbReference type="eggNOG" id="COG0771">
    <property type="taxonomic scope" value="Bacteria"/>
</dbReference>
<dbReference type="HOGENOM" id="CLU_032540_1_0_6"/>
<dbReference type="OrthoDB" id="9809796at2"/>
<dbReference type="UniPathway" id="UPA00219"/>
<dbReference type="Proteomes" id="UP000001171">
    <property type="component" value="Chromosome"/>
</dbReference>
<dbReference type="GO" id="GO:0005737">
    <property type="term" value="C:cytoplasm"/>
    <property type="evidence" value="ECO:0007669"/>
    <property type="project" value="UniProtKB-SubCell"/>
</dbReference>
<dbReference type="GO" id="GO:0005524">
    <property type="term" value="F:ATP binding"/>
    <property type="evidence" value="ECO:0007669"/>
    <property type="project" value="UniProtKB-UniRule"/>
</dbReference>
<dbReference type="GO" id="GO:0008764">
    <property type="term" value="F:UDP-N-acetylmuramoylalanine-D-glutamate ligase activity"/>
    <property type="evidence" value="ECO:0007669"/>
    <property type="project" value="UniProtKB-UniRule"/>
</dbReference>
<dbReference type="GO" id="GO:0051301">
    <property type="term" value="P:cell division"/>
    <property type="evidence" value="ECO:0007669"/>
    <property type="project" value="UniProtKB-KW"/>
</dbReference>
<dbReference type="GO" id="GO:0071555">
    <property type="term" value="P:cell wall organization"/>
    <property type="evidence" value="ECO:0007669"/>
    <property type="project" value="UniProtKB-KW"/>
</dbReference>
<dbReference type="GO" id="GO:0009252">
    <property type="term" value="P:peptidoglycan biosynthetic process"/>
    <property type="evidence" value="ECO:0007669"/>
    <property type="project" value="UniProtKB-UniRule"/>
</dbReference>
<dbReference type="GO" id="GO:0008360">
    <property type="term" value="P:regulation of cell shape"/>
    <property type="evidence" value="ECO:0007669"/>
    <property type="project" value="UniProtKB-KW"/>
</dbReference>
<dbReference type="Gene3D" id="3.90.190.20">
    <property type="entry name" value="Mur ligase, C-terminal domain"/>
    <property type="match status" value="1"/>
</dbReference>
<dbReference type="Gene3D" id="3.40.1190.10">
    <property type="entry name" value="Mur-like, catalytic domain"/>
    <property type="match status" value="1"/>
</dbReference>
<dbReference type="Gene3D" id="3.40.50.720">
    <property type="entry name" value="NAD(P)-binding Rossmann-like Domain"/>
    <property type="match status" value="1"/>
</dbReference>
<dbReference type="HAMAP" id="MF_00639">
    <property type="entry name" value="MurD"/>
    <property type="match status" value="1"/>
</dbReference>
<dbReference type="InterPro" id="IPR036565">
    <property type="entry name" value="Mur-like_cat_sf"/>
</dbReference>
<dbReference type="InterPro" id="IPR004101">
    <property type="entry name" value="Mur_ligase_C"/>
</dbReference>
<dbReference type="InterPro" id="IPR036615">
    <property type="entry name" value="Mur_ligase_C_dom_sf"/>
</dbReference>
<dbReference type="InterPro" id="IPR013221">
    <property type="entry name" value="Mur_ligase_cen"/>
</dbReference>
<dbReference type="InterPro" id="IPR005762">
    <property type="entry name" value="MurD"/>
</dbReference>
<dbReference type="NCBIfam" id="TIGR01087">
    <property type="entry name" value="murD"/>
    <property type="match status" value="1"/>
</dbReference>
<dbReference type="PANTHER" id="PTHR43692">
    <property type="entry name" value="UDP-N-ACETYLMURAMOYLALANINE--D-GLUTAMATE LIGASE"/>
    <property type="match status" value="1"/>
</dbReference>
<dbReference type="PANTHER" id="PTHR43692:SF1">
    <property type="entry name" value="UDP-N-ACETYLMURAMOYLALANINE--D-GLUTAMATE LIGASE"/>
    <property type="match status" value="1"/>
</dbReference>
<dbReference type="Pfam" id="PF02875">
    <property type="entry name" value="Mur_ligase_C"/>
    <property type="match status" value="1"/>
</dbReference>
<dbReference type="Pfam" id="PF08245">
    <property type="entry name" value="Mur_ligase_M"/>
    <property type="match status" value="1"/>
</dbReference>
<dbReference type="Pfam" id="PF21799">
    <property type="entry name" value="MurD-like_N"/>
    <property type="match status" value="1"/>
</dbReference>
<dbReference type="SUPFAM" id="SSF51984">
    <property type="entry name" value="MurCD N-terminal domain"/>
    <property type="match status" value="1"/>
</dbReference>
<dbReference type="SUPFAM" id="SSF53623">
    <property type="entry name" value="MurD-like peptide ligases, catalytic domain"/>
    <property type="match status" value="1"/>
</dbReference>
<dbReference type="SUPFAM" id="SSF53244">
    <property type="entry name" value="MurD-like peptide ligases, peptide-binding domain"/>
    <property type="match status" value="1"/>
</dbReference>
<comment type="function">
    <text evidence="1">Cell wall formation. Catalyzes the addition of glutamate to the nucleotide precursor UDP-N-acetylmuramoyl-L-alanine (UMA).</text>
</comment>
<comment type="catalytic activity">
    <reaction evidence="1">
        <text>UDP-N-acetyl-alpha-D-muramoyl-L-alanine + D-glutamate + ATP = UDP-N-acetyl-alpha-D-muramoyl-L-alanyl-D-glutamate + ADP + phosphate + H(+)</text>
        <dbReference type="Rhea" id="RHEA:16429"/>
        <dbReference type="ChEBI" id="CHEBI:15378"/>
        <dbReference type="ChEBI" id="CHEBI:29986"/>
        <dbReference type="ChEBI" id="CHEBI:30616"/>
        <dbReference type="ChEBI" id="CHEBI:43474"/>
        <dbReference type="ChEBI" id="CHEBI:83898"/>
        <dbReference type="ChEBI" id="CHEBI:83900"/>
        <dbReference type="ChEBI" id="CHEBI:456216"/>
        <dbReference type="EC" id="6.3.2.9"/>
    </reaction>
</comment>
<comment type="pathway">
    <text evidence="1">Cell wall biogenesis; peptidoglycan biosynthesis.</text>
</comment>
<comment type="subcellular location">
    <subcellularLocation>
        <location evidence="1">Cytoplasm</location>
    </subcellularLocation>
</comment>
<comment type="similarity">
    <text evidence="1">Belongs to the MurCDEF family.</text>
</comment>
<sequence>MTKIAWQNTKHIVVLGLGKTGVSVLRYLQHKRQQDQKLAEVKIQVFDSRENPPGLEEAKQILGDAELINRHWELEDTLAADLIIASPGIDLREDPVVLARDADIPIVGDVELFAQESKLPIVAVTGSNGKSTVTRMVEFVAKQCGKNVAAAGNIGVPVLDLLLQEQHPDAVILELSSFQLESVSSLKLKAAALMNISADHMDRYCTLDEYVKAKQRIFTHAKTWILNRQQQDTWPHPVTGKLMTFGNDSHPKHFGLLSGNIDRVSGPVAVTFDGSVVLRADQLQLQGIHNLVNVQAALALCQAIDIDIEAAVRAVKEFKGLPHRCELVSDNEGVLWVNDSKATNIGATAAAVEGLRPMINGRLLLIAGGVGKGADFRELQSTLERVDILLTIGEDGPRIGQLFNGSRQVKSLQQAVELAASLVQTGDMVLLSPACASFDQFQNFEHRGDSFRHAVEALYVNSA</sequence>
<reference key="1">
    <citation type="journal article" date="2004" name="Proc. Natl. Acad. Sci. U.S.A.">
        <title>Genome sequence of the deep-sea gamma-proteobacterium Idiomarina loihiensis reveals amino acid fermentation as a source of carbon and energy.</title>
        <authorList>
            <person name="Hou S."/>
            <person name="Saw J.H."/>
            <person name="Lee K.S."/>
            <person name="Freitas T.A."/>
            <person name="Belisle C."/>
            <person name="Kawarabayasi Y."/>
            <person name="Donachie S.P."/>
            <person name="Pikina A."/>
            <person name="Galperin M.Y."/>
            <person name="Koonin E.V."/>
            <person name="Makarova K.S."/>
            <person name="Omelchenko M.V."/>
            <person name="Sorokin A."/>
            <person name="Wolf Y.I."/>
            <person name="Li Q.X."/>
            <person name="Keum Y.S."/>
            <person name="Campbell S."/>
            <person name="Denery J."/>
            <person name="Aizawa S."/>
            <person name="Shibata S."/>
            <person name="Malahoff A."/>
            <person name="Alam M."/>
        </authorList>
    </citation>
    <scope>NUCLEOTIDE SEQUENCE [LARGE SCALE GENOMIC DNA]</scope>
    <source>
        <strain>ATCC BAA-735 / DSM 15497 / L2-TR</strain>
    </source>
</reference>
<feature type="chain" id="PRO_0000109027" description="UDP-N-acetylmuramoylalanine--D-glutamate ligase">
    <location>
        <begin position="1"/>
        <end position="463"/>
    </location>
</feature>
<feature type="binding site" evidence="1">
    <location>
        <begin position="126"/>
        <end position="132"/>
    </location>
    <ligand>
        <name>ATP</name>
        <dbReference type="ChEBI" id="CHEBI:30616"/>
    </ligand>
</feature>